<organism>
    <name type="scientific">Bacillus subtilis (strain 168)</name>
    <dbReference type="NCBI Taxonomy" id="224308"/>
    <lineage>
        <taxon>Bacteria</taxon>
        <taxon>Bacillati</taxon>
        <taxon>Bacillota</taxon>
        <taxon>Bacilli</taxon>
        <taxon>Bacillales</taxon>
        <taxon>Bacillaceae</taxon>
        <taxon>Bacillus</taxon>
    </lineage>
</organism>
<name>YJZE_BACSU</name>
<protein>
    <recommendedName>
        <fullName>Uncharacterized protein YjzE</fullName>
    </recommendedName>
</protein>
<proteinExistence type="predicted"/>
<reference key="1">
    <citation type="journal article" date="1997" name="Nature">
        <title>The complete genome sequence of the Gram-positive bacterium Bacillus subtilis.</title>
        <authorList>
            <person name="Kunst F."/>
            <person name="Ogasawara N."/>
            <person name="Moszer I."/>
            <person name="Albertini A.M."/>
            <person name="Alloni G."/>
            <person name="Azevedo V."/>
            <person name="Bertero M.G."/>
            <person name="Bessieres P."/>
            <person name="Bolotin A."/>
            <person name="Borchert S."/>
            <person name="Borriss R."/>
            <person name="Boursier L."/>
            <person name="Brans A."/>
            <person name="Braun M."/>
            <person name="Brignell S.C."/>
            <person name="Bron S."/>
            <person name="Brouillet S."/>
            <person name="Bruschi C.V."/>
            <person name="Caldwell B."/>
            <person name="Capuano V."/>
            <person name="Carter N.M."/>
            <person name="Choi S.-K."/>
            <person name="Codani J.-J."/>
            <person name="Connerton I.F."/>
            <person name="Cummings N.J."/>
            <person name="Daniel R.A."/>
            <person name="Denizot F."/>
            <person name="Devine K.M."/>
            <person name="Duesterhoeft A."/>
            <person name="Ehrlich S.D."/>
            <person name="Emmerson P.T."/>
            <person name="Entian K.-D."/>
            <person name="Errington J."/>
            <person name="Fabret C."/>
            <person name="Ferrari E."/>
            <person name="Foulger D."/>
            <person name="Fritz C."/>
            <person name="Fujita M."/>
            <person name="Fujita Y."/>
            <person name="Fuma S."/>
            <person name="Galizzi A."/>
            <person name="Galleron N."/>
            <person name="Ghim S.-Y."/>
            <person name="Glaser P."/>
            <person name="Goffeau A."/>
            <person name="Golightly E.J."/>
            <person name="Grandi G."/>
            <person name="Guiseppi G."/>
            <person name="Guy B.J."/>
            <person name="Haga K."/>
            <person name="Haiech J."/>
            <person name="Harwood C.R."/>
            <person name="Henaut A."/>
            <person name="Hilbert H."/>
            <person name="Holsappel S."/>
            <person name="Hosono S."/>
            <person name="Hullo M.-F."/>
            <person name="Itaya M."/>
            <person name="Jones L.-M."/>
            <person name="Joris B."/>
            <person name="Karamata D."/>
            <person name="Kasahara Y."/>
            <person name="Klaerr-Blanchard M."/>
            <person name="Klein C."/>
            <person name="Kobayashi Y."/>
            <person name="Koetter P."/>
            <person name="Koningstein G."/>
            <person name="Krogh S."/>
            <person name="Kumano M."/>
            <person name="Kurita K."/>
            <person name="Lapidus A."/>
            <person name="Lardinois S."/>
            <person name="Lauber J."/>
            <person name="Lazarevic V."/>
            <person name="Lee S.-M."/>
            <person name="Levine A."/>
            <person name="Liu H."/>
            <person name="Masuda S."/>
            <person name="Mauel C."/>
            <person name="Medigue C."/>
            <person name="Medina N."/>
            <person name="Mellado R.P."/>
            <person name="Mizuno M."/>
            <person name="Moestl D."/>
            <person name="Nakai S."/>
            <person name="Noback M."/>
            <person name="Noone D."/>
            <person name="O'Reilly M."/>
            <person name="Ogawa K."/>
            <person name="Ogiwara A."/>
            <person name="Oudega B."/>
            <person name="Park S.-H."/>
            <person name="Parro V."/>
            <person name="Pohl T.M."/>
            <person name="Portetelle D."/>
            <person name="Porwollik S."/>
            <person name="Prescott A.M."/>
            <person name="Presecan E."/>
            <person name="Pujic P."/>
            <person name="Purnelle B."/>
            <person name="Rapoport G."/>
            <person name="Rey M."/>
            <person name="Reynolds S."/>
            <person name="Rieger M."/>
            <person name="Rivolta C."/>
            <person name="Rocha E."/>
            <person name="Roche B."/>
            <person name="Rose M."/>
            <person name="Sadaie Y."/>
            <person name="Sato T."/>
            <person name="Scanlan E."/>
            <person name="Schleich S."/>
            <person name="Schroeter R."/>
            <person name="Scoffone F."/>
            <person name="Sekiguchi J."/>
            <person name="Sekowska A."/>
            <person name="Seror S.J."/>
            <person name="Serror P."/>
            <person name="Shin B.-S."/>
            <person name="Soldo B."/>
            <person name="Sorokin A."/>
            <person name="Tacconi E."/>
            <person name="Takagi T."/>
            <person name="Takahashi H."/>
            <person name="Takemaru K."/>
            <person name="Takeuchi M."/>
            <person name="Tamakoshi A."/>
            <person name="Tanaka T."/>
            <person name="Terpstra P."/>
            <person name="Tognoni A."/>
            <person name="Tosato V."/>
            <person name="Uchiyama S."/>
            <person name="Vandenbol M."/>
            <person name="Vannier F."/>
            <person name="Vassarotti A."/>
            <person name="Viari A."/>
            <person name="Wambutt R."/>
            <person name="Wedler E."/>
            <person name="Wedler H."/>
            <person name="Weitzenegger T."/>
            <person name="Winters P."/>
            <person name="Wipat A."/>
            <person name="Yamamoto H."/>
            <person name="Yamane K."/>
            <person name="Yasumoto K."/>
            <person name="Yata K."/>
            <person name="Yoshida K."/>
            <person name="Yoshikawa H.-F."/>
            <person name="Zumstein E."/>
            <person name="Yoshikawa H."/>
            <person name="Danchin A."/>
        </authorList>
    </citation>
    <scope>NUCLEOTIDE SEQUENCE [LARGE SCALE GENOMIC DNA]</scope>
    <source>
        <strain>168</strain>
    </source>
</reference>
<feature type="chain" id="PRO_0000382207" description="Uncharacterized protein YjzE">
    <location>
        <begin position="1"/>
        <end position="84"/>
    </location>
</feature>
<dbReference type="EMBL" id="AL009126">
    <property type="protein sequence ID" value="CAX52596.1"/>
    <property type="molecule type" value="Genomic_DNA"/>
</dbReference>
<dbReference type="RefSeq" id="WP_003232866.1">
    <property type="nucleotide sequence ID" value="NZ_OZ025638.1"/>
</dbReference>
<dbReference type="RefSeq" id="YP_003097706.1">
    <property type="nucleotide sequence ID" value="NC_000964.3"/>
</dbReference>
<dbReference type="SMR" id="C0H3Y9"/>
<dbReference type="FunCoup" id="C0H3Y9">
    <property type="interactions" value="5"/>
</dbReference>
<dbReference type="STRING" id="224308.BSU11839"/>
<dbReference type="PaxDb" id="224308-BSU11839"/>
<dbReference type="EnsemblBacteria" id="CAX52596">
    <property type="protein sequence ID" value="CAX52596"/>
    <property type="gene ID" value="BSU_11839"/>
</dbReference>
<dbReference type="GeneID" id="8303175"/>
<dbReference type="KEGG" id="bsu:BSU11839"/>
<dbReference type="PATRIC" id="fig|224308.179.peg.1274"/>
<dbReference type="eggNOG" id="ENOG5030CPB">
    <property type="taxonomic scope" value="Bacteria"/>
</dbReference>
<dbReference type="InParanoid" id="C0H3Y9"/>
<dbReference type="OrthoDB" id="2706316at2"/>
<dbReference type="BioCyc" id="BSUB:BSU11839-MONOMER"/>
<dbReference type="Proteomes" id="UP000001570">
    <property type="component" value="Chromosome"/>
</dbReference>
<keyword id="KW-1185">Reference proteome</keyword>
<gene>
    <name type="primary">yjzE</name>
    <name type="ordered locus">BSU11839</name>
</gene>
<sequence>MIYAGQIQNQQYAQYANRTIGHKQDYAGTEKISYVPFQRVYKELEKQQENQTAAERKVNEMKRKRSLYKRLREKGMGTYINRYV</sequence>
<accession>C0H3Y9</accession>